<sequence>MKQYLITGGTGMVGSQLVNEIKKSDSHITILTRHDQISNDKKISYVNWAKSGWEHKVPQNIDVVINLAGATLNKRWTPEYKQTLMLSRIQSTQALYELFKSRNKAPKVLFNASATGYYPPDLFMSYTEVYKTLPFDFLSDIVYQWERFAQQFEQLGTRVVIGRFGMILSNEGGALQTMKLPYKYYIGGKLGSGQQWYSWIHINDLIQAILFLINNESASGPFNLTAPIPERQNLFGYTLARAMHKPHETWAPSLAMRLILGQMSTVVLDTQKVLPNKIQALGFQFKYSNLKMALEDLIKE</sequence>
<organism>
    <name type="scientific">Staphylococcus aureus (strain Mu50 / ATCC 700699)</name>
    <dbReference type="NCBI Taxonomy" id="158878"/>
    <lineage>
        <taxon>Bacteria</taxon>
        <taxon>Bacillati</taxon>
        <taxon>Bacillota</taxon>
        <taxon>Bacilli</taxon>
        <taxon>Bacillales</taxon>
        <taxon>Staphylococcaceae</taxon>
        <taxon>Staphylococcus</taxon>
    </lineage>
</organism>
<dbReference type="EMBL" id="BA000017">
    <property type="protein sequence ID" value="BAB56931.1"/>
    <property type="molecule type" value="Genomic_DNA"/>
</dbReference>
<dbReference type="RefSeq" id="WP_000816304.1">
    <property type="nucleotide sequence ID" value="NC_002758.2"/>
</dbReference>
<dbReference type="SMR" id="Q99VK8"/>
<dbReference type="DNASU" id="1120743"/>
<dbReference type="KEGG" id="sav:SAV0769"/>
<dbReference type="HOGENOM" id="CLU_047373_0_3_9"/>
<dbReference type="PhylomeDB" id="Q99VK8"/>
<dbReference type="Proteomes" id="UP000002481">
    <property type="component" value="Chromosome"/>
</dbReference>
<dbReference type="Gene3D" id="3.40.50.720">
    <property type="entry name" value="NAD(P)-binding Rossmann-like Domain"/>
    <property type="match status" value="1"/>
</dbReference>
<dbReference type="InterPro" id="IPR013549">
    <property type="entry name" value="DUF1731"/>
</dbReference>
<dbReference type="InterPro" id="IPR001509">
    <property type="entry name" value="Epimerase_deHydtase"/>
</dbReference>
<dbReference type="InterPro" id="IPR036291">
    <property type="entry name" value="NAD(P)-bd_dom_sf"/>
</dbReference>
<dbReference type="InterPro" id="IPR010099">
    <property type="entry name" value="SDR39U1"/>
</dbReference>
<dbReference type="NCBIfam" id="TIGR01777">
    <property type="entry name" value="yfcH"/>
    <property type="match status" value="1"/>
</dbReference>
<dbReference type="PANTHER" id="PTHR11092:SF0">
    <property type="entry name" value="EPIMERASE FAMILY PROTEIN SDR39U1"/>
    <property type="match status" value="1"/>
</dbReference>
<dbReference type="PANTHER" id="PTHR11092">
    <property type="entry name" value="SUGAR NUCLEOTIDE EPIMERASE RELATED"/>
    <property type="match status" value="1"/>
</dbReference>
<dbReference type="Pfam" id="PF08338">
    <property type="entry name" value="DUF1731"/>
    <property type="match status" value="1"/>
</dbReference>
<dbReference type="Pfam" id="PF01370">
    <property type="entry name" value="Epimerase"/>
    <property type="match status" value="1"/>
</dbReference>
<dbReference type="SUPFAM" id="SSF51735">
    <property type="entry name" value="NAD(P)-binding Rossmann-fold domains"/>
    <property type="match status" value="1"/>
</dbReference>
<reference key="1">
    <citation type="journal article" date="2001" name="Lancet">
        <title>Whole genome sequencing of meticillin-resistant Staphylococcus aureus.</title>
        <authorList>
            <person name="Kuroda M."/>
            <person name="Ohta T."/>
            <person name="Uchiyama I."/>
            <person name="Baba T."/>
            <person name="Yuzawa H."/>
            <person name="Kobayashi I."/>
            <person name="Cui L."/>
            <person name="Oguchi A."/>
            <person name="Aoki K."/>
            <person name="Nagai Y."/>
            <person name="Lian J.-Q."/>
            <person name="Ito T."/>
            <person name="Kanamori M."/>
            <person name="Matsumaru H."/>
            <person name="Maruyama A."/>
            <person name="Murakami H."/>
            <person name="Hosoyama A."/>
            <person name="Mizutani-Ui Y."/>
            <person name="Takahashi N.K."/>
            <person name="Sawano T."/>
            <person name="Inoue R."/>
            <person name="Kaito C."/>
            <person name="Sekimizu K."/>
            <person name="Hirakawa H."/>
            <person name="Kuhara S."/>
            <person name="Goto S."/>
            <person name="Yabuzaki J."/>
            <person name="Kanehisa M."/>
            <person name="Yamashita A."/>
            <person name="Oshima K."/>
            <person name="Furuya K."/>
            <person name="Yoshino C."/>
            <person name="Shiba T."/>
            <person name="Hattori M."/>
            <person name="Ogasawara N."/>
            <person name="Hayashi H."/>
            <person name="Hiramatsu K."/>
        </authorList>
    </citation>
    <scope>NUCLEOTIDE SEQUENCE [LARGE SCALE GENOMIC DNA]</scope>
    <source>
        <strain>Mu50 / ATCC 700699</strain>
    </source>
</reference>
<feature type="chain" id="PRO_0000274152" description="Epimerase family protein SAV0769">
    <location>
        <begin position="1"/>
        <end position="300"/>
    </location>
</feature>
<accession>Q99VK8</accession>
<proteinExistence type="inferred from homology"/>
<comment type="similarity">
    <text evidence="1">Belongs to the NAD(P)-dependent epimerase/dehydratase family. SDR39U1 subfamily.</text>
</comment>
<name>Y769_STAAM</name>
<gene>
    <name type="ordered locus">SAV0769</name>
</gene>
<protein>
    <recommendedName>
        <fullName>Epimerase family protein SAV0769</fullName>
    </recommendedName>
</protein>
<evidence type="ECO:0000305" key="1"/>